<comment type="function">
    <text evidence="1">Plant non-specific lipid-transfer proteins transfer phospholipids as well as galactolipids across membranes. May play a role in wax or cutin deposition in the cell walls of expanding epidermal cells and certain secretory tissues (By similarity).</text>
</comment>
<comment type="mass spectrometry" mass="7000.0" method="MALDI" evidence="3"/>
<comment type="miscellaneous">
    <text evidence="3">Causes an allergic reaction.</text>
</comment>
<comment type="similarity">
    <text evidence="2">Belongs to the plant LTP family.</text>
</comment>
<comment type="caution">
    <text evidence="3">The order of the peptides shown is unknown.</text>
</comment>
<reference evidence="5" key="1">
    <citation type="submission" date="2011-09" db="UniProtKB">
        <title>Allergic sensitization to Goji berries is mediated by a 7 kDa band (LTP).</title>
        <authorList>
            <person name="Carnes J."/>
            <person name="Lopez-matas M.A."/>
            <person name="Saez R."/>
        </authorList>
    </citation>
    <scope>PROTEIN SEQUENCE</scope>
    <scope>MASS SPECTROMETRY</scope>
    <source>
        <tissue evidence="3">Fruit</tissue>
    </source>
</reference>
<proteinExistence type="evidence at protein level"/>
<keyword id="KW-0903">Direct protein sequencing</keyword>
<keyword id="KW-0445">Lipid transport</keyword>
<keyword id="KW-0446">Lipid-binding</keyword>
<keyword id="KW-0568">Pathogenesis-related protein</keyword>
<keyword id="KW-0611">Plant defense</keyword>
<keyword id="KW-0813">Transport</keyword>
<organism>
    <name type="scientific">Lycium barbarum</name>
    <name type="common">Barbary matrimony-vine</name>
    <dbReference type="NCBI Taxonomy" id="112863"/>
    <lineage>
        <taxon>Eukaryota</taxon>
        <taxon>Viridiplantae</taxon>
        <taxon>Streptophyta</taxon>
        <taxon>Embryophyta</taxon>
        <taxon>Tracheophyta</taxon>
        <taxon>Spermatophyta</taxon>
        <taxon>Magnoliopsida</taxon>
        <taxon>eudicotyledons</taxon>
        <taxon>Gunneridae</taxon>
        <taxon>Pentapetalae</taxon>
        <taxon>asterids</taxon>
        <taxon>lamiids</taxon>
        <taxon>Solanales</taxon>
        <taxon>Solanaceae</taxon>
        <taxon>Solanoideae</taxon>
        <taxon>Lycieae</taxon>
        <taxon>Lycium</taxon>
    </lineage>
</organism>
<feature type="chain" id="PRO_0000414620" description="Non-specific lipid-transfer protein">
    <location>
        <begin position="1" status="less than"/>
        <end position="51"/>
    </location>
</feature>
<feature type="non-consecutive residues" evidence="4">
    <location>
        <begin position="11"/>
        <end position="12"/>
    </location>
</feature>
<feature type="non-consecutive residues" evidence="4">
    <location>
        <begin position="32"/>
        <end position="33"/>
    </location>
</feature>
<feature type="non-consecutive residues" evidence="4">
    <location>
        <begin position="40"/>
        <end position="41"/>
    </location>
</feature>
<feature type="non-terminal residue" evidence="4">
    <location>
        <position position="1"/>
    </location>
</feature>
<accession>B3A0N2</accession>
<protein>
    <recommendedName>
        <fullName evidence="1">Non-specific lipid-transfer protein</fullName>
        <shortName evidence="1 4">LTP</shortName>
    </recommendedName>
</protein>
<dbReference type="SMR" id="B3A0N2"/>
<dbReference type="Allergome" id="10194">
    <property type="allergen name" value="Lyc ba 3"/>
</dbReference>
<dbReference type="GO" id="GO:0008289">
    <property type="term" value="F:lipid binding"/>
    <property type="evidence" value="ECO:0007669"/>
    <property type="project" value="UniProtKB-KW"/>
</dbReference>
<dbReference type="GO" id="GO:0006952">
    <property type="term" value="P:defense response"/>
    <property type="evidence" value="ECO:0007669"/>
    <property type="project" value="UniProtKB-KW"/>
</dbReference>
<dbReference type="GO" id="GO:0006869">
    <property type="term" value="P:lipid transport"/>
    <property type="evidence" value="ECO:0007669"/>
    <property type="project" value="UniProtKB-KW"/>
</dbReference>
<dbReference type="Gene3D" id="1.10.110.10">
    <property type="entry name" value="Plant lipid-transfer and hydrophobic proteins"/>
    <property type="match status" value="1"/>
</dbReference>
<dbReference type="InterPro" id="IPR036312">
    <property type="entry name" value="Bifun_inhib/LTP/seed_sf"/>
</dbReference>
<dbReference type="InterPro" id="IPR016140">
    <property type="entry name" value="Bifunc_inhib/LTP/seed_store"/>
</dbReference>
<dbReference type="InterPro" id="IPR000528">
    <property type="entry name" value="Plant_nsLTP"/>
</dbReference>
<dbReference type="Pfam" id="PF00234">
    <property type="entry name" value="Tryp_alpha_amyl"/>
    <property type="match status" value="1"/>
</dbReference>
<dbReference type="SUPFAM" id="SSF47699">
    <property type="entry name" value="Bifunctional inhibitor/lipid-transfer protein/seed storage 2S albumin"/>
    <property type="match status" value="1"/>
</dbReference>
<dbReference type="PROSITE" id="PS00597">
    <property type="entry name" value="PLANT_LTP"/>
    <property type="match status" value="1"/>
</dbReference>
<sequence length="51" mass="4881">GPLGGCCGGIKKSAAAGISGINYGIAAGLPGKCGVNIPYKISPSTDCSKVQ</sequence>
<evidence type="ECO:0000250" key="1">
    <source>
        <dbReference type="UniProtKB" id="Q42952"/>
    </source>
</evidence>
<evidence type="ECO:0000255" key="2"/>
<evidence type="ECO:0000269" key="3">
    <source ref="1"/>
</evidence>
<evidence type="ECO:0000303" key="4">
    <source ref="1"/>
</evidence>
<evidence type="ECO:0000305" key="5"/>
<name>NLTP_LYCBA</name>